<accession>D2ATV0</accession>
<keyword id="KW-0963">Cytoplasm</keyword>
<keyword id="KW-0647">Proteasome</keyword>
<keyword id="KW-1185">Reference proteome</keyword>
<evidence type="ECO:0000255" key="1">
    <source>
        <dbReference type="HAMAP-Rule" id="MF_00289"/>
    </source>
</evidence>
<evidence type="ECO:0000256" key="2">
    <source>
        <dbReference type="SAM" id="MobiDB-lite"/>
    </source>
</evidence>
<evidence type="ECO:0000305" key="3"/>
<protein>
    <recommendedName>
        <fullName evidence="1">Proteasome subunit alpha</fullName>
    </recommendedName>
    <alternativeName>
        <fullName evidence="1">20S proteasome alpha subunit</fullName>
    </alternativeName>
    <alternativeName>
        <fullName evidence="1">Proteasome core protein PrcA</fullName>
    </alternativeName>
</protein>
<feature type="chain" id="PRO_0000397179" description="Proteasome subunit alpha">
    <location>
        <begin position="1"/>
        <end position="259"/>
    </location>
</feature>
<feature type="region of interest" description="Disordered" evidence="2">
    <location>
        <begin position="226"/>
        <end position="259"/>
    </location>
</feature>
<feature type="compositionally biased region" description="Low complexity" evidence="2">
    <location>
        <begin position="227"/>
        <end position="250"/>
    </location>
</feature>
<name>PSA_STRRD</name>
<comment type="function">
    <text evidence="1">Component of the proteasome core, a large protease complex with broad specificity involved in protein degradation.</text>
</comment>
<comment type="activity regulation">
    <text evidence="1">The formation of the proteasomal ATPase ARC-20S proteasome complex, likely via the docking of the C-termini of ARC into the intersubunit pockets in the alpha-rings, may trigger opening of the gate for substrate entry. Interconversion between the open-gate and close-gate conformations leads to a dynamic regulation of the 20S proteasome proteolysis activity.</text>
</comment>
<comment type="pathway">
    <text evidence="1">Protein degradation; proteasomal Pup-dependent pathway.</text>
</comment>
<comment type="subunit">
    <text evidence="1">The 20S proteasome core is composed of 14 alpha and 14 beta subunits that assemble into four stacked heptameric rings, resulting in a barrel-shaped structure. The two inner rings, each composed of seven catalytic beta subunits, are sandwiched by two outer rings, each composed of seven alpha subunits. The catalytic chamber with the active sites is on the inside of the barrel. Has a gated structure, the ends of the cylinder being occluded by the N-termini of the alpha-subunits. Is capped by the proteasome-associated ATPase, ARC.</text>
</comment>
<comment type="subcellular location">
    <subcellularLocation>
        <location evidence="1">Cytoplasm</location>
    </subcellularLocation>
</comment>
<comment type="similarity">
    <text evidence="1">Belongs to the peptidase T1A family.</text>
</comment>
<comment type="sequence caution" evidence="3">
    <conflict type="erroneous initiation">
        <sequence resource="EMBL-CDS" id="ACZ88605"/>
    </conflict>
    <text>Truncated N-terminus.</text>
</comment>
<proteinExistence type="inferred from homology"/>
<dbReference type="EMBL" id="CP001814">
    <property type="protein sequence ID" value="ACZ88605.1"/>
    <property type="status" value="ALT_INIT"/>
    <property type="molecule type" value="Genomic_DNA"/>
</dbReference>
<dbReference type="RefSeq" id="WP_174435266.1">
    <property type="nucleotide sequence ID" value="NC_013595.1"/>
</dbReference>
<dbReference type="SMR" id="D2ATV0"/>
<dbReference type="STRING" id="479432.Sros_5870"/>
<dbReference type="MEROPS" id="T01.980"/>
<dbReference type="KEGG" id="sro:Sros_5870"/>
<dbReference type="eggNOG" id="COG0638">
    <property type="taxonomic scope" value="Bacteria"/>
</dbReference>
<dbReference type="HOGENOM" id="CLU_071031_0_0_11"/>
<dbReference type="OrthoDB" id="9775643at2"/>
<dbReference type="UniPathway" id="UPA00997"/>
<dbReference type="Proteomes" id="UP000002029">
    <property type="component" value="Chromosome"/>
</dbReference>
<dbReference type="GO" id="GO:0005737">
    <property type="term" value="C:cytoplasm"/>
    <property type="evidence" value="ECO:0007669"/>
    <property type="project" value="UniProtKB-SubCell"/>
</dbReference>
<dbReference type="GO" id="GO:0019773">
    <property type="term" value="C:proteasome core complex, alpha-subunit complex"/>
    <property type="evidence" value="ECO:0007669"/>
    <property type="project" value="UniProtKB-UniRule"/>
</dbReference>
<dbReference type="GO" id="GO:0004298">
    <property type="term" value="F:threonine-type endopeptidase activity"/>
    <property type="evidence" value="ECO:0007669"/>
    <property type="project" value="InterPro"/>
</dbReference>
<dbReference type="GO" id="GO:0019941">
    <property type="term" value="P:modification-dependent protein catabolic process"/>
    <property type="evidence" value="ECO:0007669"/>
    <property type="project" value="UniProtKB-UniRule"/>
</dbReference>
<dbReference type="GO" id="GO:0010498">
    <property type="term" value="P:proteasomal protein catabolic process"/>
    <property type="evidence" value="ECO:0007669"/>
    <property type="project" value="UniProtKB-UniRule"/>
</dbReference>
<dbReference type="CDD" id="cd01906">
    <property type="entry name" value="proteasome_protease_HslV"/>
    <property type="match status" value="1"/>
</dbReference>
<dbReference type="Gene3D" id="3.60.20.10">
    <property type="entry name" value="Glutamine Phosphoribosylpyrophosphate, subunit 1, domain 1"/>
    <property type="match status" value="1"/>
</dbReference>
<dbReference type="HAMAP" id="MF_00289_B">
    <property type="entry name" value="Proteasome_A_B"/>
    <property type="match status" value="1"/>
</dbReference>
<dbReference type="InterPro" id="IPR029055">
    <property type="entry name" value="Ntn_hydrolases_N"/>
</dbReference>
<dbReference type="InterPro" id="IPR050115">
    <property type="entry name" value="Proteasome_alpha"/>
</dbReference>
<dbReference type="InterPro" id="IPR023332">
    <property type="entry name" value="Proteasome_alpha-type"/>
</dbReference>
<dbReference type="InterPro" id="IPR022296">
    <property type="entry name" value="Proteasome_asu_bac"/>
</dbReference>
<dbReference type="InterPro" id="IPR001353">
    <property type="entry name" value="Proteasome_sua/b"/>
</dbReference>
<dbReference type="NCBIfam" id="TIGR03691">
    <property type="entry name" value="20S_bact_alpha"/>
    <property type="match status" value="1"/>
</dbReference>
<dbReference type="PANTHER" id="PTHR11599">
    <property type="entry name" value="PROTEASOME SUBUNIT ALPHA/BETA"/>
    <property type="match status" value="1"/>
</dbReference>
<dbReference type="Pfam" id="PF00227">
    <property type="entry name" value="Proteasome"/>
    <property type="match status" value="1"/>
</dbReference>
<dbReference type="SUPFAM" id="SSF56235">
    <property type="entry name" value="N-terminal nucleophile aminohydrolases (Ntn hydrolases)"/>
    <property type="match status" value="1"/>
</dbReference>
<dbReference type="PROSITE" id="PS51475">
    <property type="entry name" value="PROTEASOME_ALPHA_2"/>
    <property type="match status" value="1"/>
</dbReference>
<gene>
    <name evidence="1" type="primary">prcA</name>
    <name type="ordered locus">Sros_5870</name>
</gene>
<reference key="1">
    <citation type="journal article" date="2010" name="Stand. Genomic Sci.">
        <title>Complete genome sequence of Streptosporangium roseum type strain (NI 9100).</title>
        <authorList>
            <person name="Nolan M."/>
            <person name="Sikorski J."/>
            <person name="Jando M."/>
            <person name="Lucas S."/>
            <person name="Lapidus A."/>
            <person name="Glavina Del Rio T."/>
            <person name="Chen F."/>
            <person name="Tice H."/>
            <person name="Pitluck S."/>
            <person name="Cheng J.F."/>
            <person name="Chertkov O."/>
            <person name="Sims D."/>
            <person name="Meincke L."/>
            <person name="Brettin T."/>
            <person name="Han C."/>
            <person name="Detter J.C."/>
            <person name="Bruce D."/>
            <person name="Goodwin L."/>
            <person name="Land M."/>
            <person name="Hauser L."/>
            <person name="Chang Y.J."/>
            <person name="Jeffries C.D."/>
            <person name="Ivanova N."/>
            <person name="Mavromatis K."/>
            <person name="Mikhailova N."/>
            <person name="Chen A."/>
            <person name="Palaniappan K."/>
            <person name="Chain P."/>
            <person name="Rohde M."/>
            <person name="Goker M."/>
            <person name="Bristow J."/>
            <person name="Eisen J.A."/>
            <person name="Markowitz V."/>
            <person name="Hugenholtz P."/>
            <person name="Kyrpides N.C."/>
            <person name="Klenk H.P."/>
        </authorList>
    </citation>
    <scope>NUCLEOTIDE SEQUENCE [LARGE SCALE GENOMIC DNA]</scope>
    <source>
        <strain>ATCC 12428 / DSM 43021 / JCM 3005 / KCTC 9067 / NCIMB 10171 / NRRL 2505 / NI 9100</strain>
    </source>
</reference>
<sequence>MSMPFGYVSPEQQMRDKADYARKGIARGRSVVVLQYEHGILFVAPNPSRALHKISEIYDRIGFAAVGRYNEFEALRLGGIRYADINGYNYARDDVTARGLANLYAQNLGQIFTESMKPFEVEIVVAEVGDSSDEDHIYRLTFDGSVFDETGLVAMGGQAEAVAGRLKERYRDGLPLAEALEAALFALTEPGGERSPASQLEVAVLDRNRPHRKFLRLAGPRLERLLAEGSATSATSATPGEAEAPATAPEGDVDTGSNG</sequence>
<organism>
    <name type="scientific">Streptosporangium roseum (strain ATCC 12428 / DSM 43021 / JCM 3005 / KCTC 9067 / NCIMB 10171 / NRRL 2505 / NI 9100)</name>
    <dbReference type="NCBI Taxonomy" id="479432"/>
    <lineage>
        <taxon>Bacteria</taxon>
        <taxon>Bacillati</taxon>
        <taxon>Actinomycetota</taxon>
        <taxon>Actinomycetes</taxon>
        <taxon>Streptosporangiales</taxon>
        <taxon>Streptosporangiaceae</taxon>
        <taxon>Streptosporangium</taxon>
    </lineage>
</organism>